<organism>
    <name type="scientific">Xenopus laevis</name>
    <name type="common">African clawed frog</name>
    <dbReference type="NCBI Taxonomy" id="8355"/>
    <lineage>
        <taxon>Eukaryota</taxon>
        <taxon>Metazoa</taxon>
        <taxon>Chordata</taxon>
        <taxon>Craniata</taxon>
        <taxon>Vertebrata</taxon>
        <taxon>Euteleostomi</taxon>
        <taxon>Amphibia</taxon>
        <taxon>Batrachia</taxon>
        <taxon>Anura</taxon>
        <taxon>Pipoidea</taxon>
        <taxon>Pipidae</taxon>
        <taxon>Xenopodinae</taxon>
        <taxon>Xenopus</taxon>
        <taxon>Xenopus</taxon>
    </lineage>
</organism>
<sequence>MSANVQVSGQLSSGPSLPACIVLSAVSLLCFVAGFGTGAEFVRFLSFGAIFRNISGGLDGEIPLTWSEAIRNTQFQCCIGIDIGLLFLFVLQHSLMAWTAVKKNVLHVFGVLQRSIYILCTALSLQVLMRFWQPCPHGPYLWNVSSDPWSAWLPLLCALVHTISWLLIFSVLLIFDYAELMGIKQVYYFCLGMGDPLSHKSPRVARLYAHLRHPIYLELLLILWAVPCLPPDRLILAIFFTLYLSLVHRLDVQDYAYLRSQLEKKFLLFSREEASAVGGQIRKNN</sequence>
<keyword id="KW-0472">Membrane</keyword>
<keyword id="KW-0539">Nucleus</keyword>
<keyword id="KW-1185">Reference proteome</keyword>
<keyword id="KW-0812">Transmembrane</keyword>
<keyword id="KW-1133">Transmembrane helix</keyword>
<accession>Q6GNM0</accession>
<gene>
    <name type="primary">nrm</name>
</gene>
<protein>
    <recommendedName>
        <fullName>Nurim</fullName>
    </recommendedName>
    <alternativeName>
        <fullName>Nuclear envelope membrane protein</fullName>
    </alternativeName>
    <alternativeName>
        <fullName>Nuclear rim protein</fullName>
    </alternativeName>
</protein>
<name>NRM_XENLA</name>
<dbReference type="EMBL" id="BC073486">
    <property type="protein sequence ID" value="AAH73486.1"/>
    <property type="molecule type" value="mRNA"/>
</dbReference>
<dbReference type="RefSeq" id="NP_001085892.1">
    <property type="nucleotide sequence ID" value="NM_001092423.1"/>
</dbReference>
<dbReference type="DNASU" id="444319"/>
<dbReference type="GeneID" id="444319"/>
<dbReference type="KEGG" id="xla:444319"/>
<dbReference type="AGR" id="Xenbase:XB-GENE-865292"/>
<dbReference type="CTD" id="444319"/>
<dbReference type="Xenbase" id="XB-GENE-865292">
    <property type="gene designation" value="nrm.L"/>
</dbReference>
<dbReference type="OMA" id="WSIWFPL"/>
<dbReference type="OrthoDB" id="10050858at2759"/>
<dbReference type="Proteomes" id="UP000186698">
    <property type="component" value="Chromosome 8L"/>
</dbReference>
<dbReference type="Bgee" id="444319">
    <property type="expression patterns" value="Expressed in egg cell and 19 other cell types or tissues"/>
</dbReference>
<dbReference type="GO" id="GO:0005635">
    <property type="term" value="C:nuclear envelope"/>
    <property type="evidence" value="ECO:0000250"/>
    <property type="project" value="UniProtKB"/>
</dbReference>
<dbReference type="GO" id="GO:0005637">
    <property type="term" value="C:nuclear inner membrane"/>
    <property type="evidence" value="ECO:0007669"/>
    <property type="project" value="UniProtKB-SubCell"/>
</dbReference>
<dbReference type="GO" id="GO:0031965">
    <property type="term" value="C:nuclear membrane"/>
    <property type="evidence" value="ECO:0000318"/>
    <property type="project" value="GO_Central"/>
</dbReference>
<dbReference type="InterPro" id="IPR033580">
    <property type="entry name" value="Nurim-like"/>
</dbReference>
<dbReference type="PANTHER" id="PTHR31040">
    <property type="entry name" value="NURIM"/>
    <property type="match status" value="1"/>
</dbReference>
<dbReference type="PANTHER" id="PTHR31040:SF1">
    <property type="entry name" value="NURIM"/>
    <property type="match status" value="1"/>
</dbReference>
<evidence type="ECO:0000250" key="1"/>
<evidence type="ECO:0000255" key="2"/>
<evidence type="ECO:0000305" key="3"/>
<comment type="subcellular location">
    <subcellularLocation>
        <location evidence="1">Nucleus inner membrane</location>
        <topology evidence="1">Multi-pass membrane protein</topology>
    </subcellularLocation>
</comment>
<comment type="similarity">
    <text evidence="3">Belongs to the nurim family.</text>
</comment>
<feature type="chain" id="PRO_0000299402" description="Nurim">
    <location>
        <begin position="1"/>
        <end position="285"/>
    </location>
</feature>
<feature type="topological domain" description="Nuclear" evidence="2">
    <location>
        <begin position="1"/>
        <end position="16"/>
    </location>
</feature>
<feature type="transmembrane region" description="Helical" evidence="2">
    <location>
        <begin position="17"/>
        <end position="44"/>
    </location>
</feature>
<feature type="topological domain" description="Perinuclear space" evidence="2">
    <location>
        <begin position="45"/>
        <end position="74"/>
    </location>
</feature>
<feature type="transmembrane region" description="Helical" evidence="2">
    <location>
        <begin position="75"/>
        <end position="96"/>
    </location>
</feature>
<feature type="topological domain" description="Nuclear" evidence="2">
    <location>
        <begin position="97"/>
        <end position="113"/>
    </location>
</feature>
<feature type="transmembrane region" description="Helical" evidence="2">
    <location>
        <begin position="114"/>
        <end position="130"/>
    </location>
</feature>
<feature type="topological domain" description="Perinuclear space" evidence="2">
    <location>
        <begin position="131"/>
        <end position="149"/>
    </location>
</feature>
<feature type="transmembrane region" description="Helical" evidence="2">
    <location>
        <begin position="150"/>
        <end position="180"/>
    </location>
</feature>
<feature type="topological domain" description="Nuclear" evidence="2">
    <location>
        <begin position="181"/>
        <end position="207"/>
    </location>
</feature>
<feature type="transmembrane region" description="Helical" evidence="2">
    <location>
        <begin position="208"/>
        <end position="226"/>
    </location>
</feature>
<feature type="topological domain" description="Perinuclear space" evidence="2">
    <location>
        <begin position="227"/>
        <end position="232"/>
    </location>
</feature>
<feature type="transmembrane region" description="Helical" evidence="2">
    <location>
        <begin position="233"/>
        <end position="250"/>
    </location>
</feature>
<feature type="topological domain" description="Nuclear" evidence="2">
    <location>
        <begin position="251"/>
        <end position="285"/>
    </location>
</feature>
<proteinExistence type="evidence at transcript level"/>
<reference key="1">
    <citation type="submission" date="2004-06" db="EMBL/GenBank/DDBJ databases">
        <authorList>
            <consortium name="NIH - Xenopus Gene Collection (XGC) project"/>
        </authorList>
    </citation>
    <scope>NUCLEOTIDE SEQUENCE [LARGE SCALE MRNA]</scope>
    <source>
        <tissue>Embryo</tissue>
    </source>
</reference>